<evidence type="ECO:0000255" key="1">
    <source>
        <dbReference type="HAMAP-Rule" id="MF_00046"/>
    </source>
</evidence>
<proteinExistence type="inferred from homology"/>
<name>MURC_BARBK</name>
<keyword id="KW-0067">ATP-binding</keyword>
<keyword id="KW-0131">Cell cycle</keyword>
<keyword id="KW-0132">Cell division</keyword>
<keyword id="KW-0133">Cell shape</keyword>
<keyword id="KW-0961">Cell wall biogenesis/degradation</keyword>
<keyword id="KW-0963">Cytoplasm</keyword>
<keyword id="KW-0436">Ligase</keyword>
<keyword id="KW-0547">Nucleotide-binding</keyword>
<keyword id="KW-0573">Peptidoglycan synthesis</keyword>
<dbReference type="EC" id="6.3.2.8" evidence="1"/>
<dbReference type="EMBL" id="CP000524">
    <property type="protein sequence ID" value="ABM44659.1"/>
    <property type="molecule type" value="Genomic_DNA"/>
</dbReference>
<dbReference type="RefSeq" id="WP_005767428.1">
    <property type="nucleotide sequence ID" value="NC_008783.1"/>
</dbReference>
<dbReference type="SMR" id="A1UTC4"/>
<dbReference type="STRING" id="360095.BARBAKC583_0946"/>
<dbReference type="GeneID" id="4684115"/>
<dbReference type="KEGG" id="bbk:BARBAKC583_0946"/>
<dbReference type="eggNOG" id="COG0773">
    <property type="taxonomic scope" value="Bacteria"/>
</dbReference>
<dbReference type="HOGENOM" id="CLU_028104_2_2_5"/>
<dbReference type="OrthoDB" id="9804126at2"/>
<dbReference type="UniPathway" id="UPA00219"/>
<dbReference type="Proteomes" id="UP000000643">
    <property type="component" value="Chromosome"/>
</dbReference>
<dbReference type="GO" id="GO:0005737">
    <property type="term" value="C:cytoplasm"/>
    <property type="evidence" value="ECO:0007669"/>
    <property type="project" value="UniProtKB-SubCell"/>
</dbReference>
<dbReference type="GO" id="GO:0005524">
    <property type="term" value="F:ATP binding"/>
    <property type="evidence" value="ECO:0007669"/>
    <property type="project" value="UniProtKB-UniRule"/>
</dbReference>
<dbReference type="GO" id="GO:0008763">
    <property type="term" value="F:UDP-N-acetylmuramate-L-alanine ligase activity"/>
    <property type="evidence" value="ECO:0007669"/>
    <property type="project" value="UniProtKB-UniRule"/>
</dbReference>
<dbReference type="GO" id="GO:0051301">
    <property type="term" value="P:cell division"/>
    <property type="evidence" value="ECO:0007669"/>
    <property type="project" value="UniProtKB-KW"/>
</dbReference>
<dbReference type="GO" id="GO:0071555">
    <property type="term" value="P:cell wall organization"/>
    <property type="evidence" value="ECO:0007669"/>
    <property type="project" value="UniProtKB-KW"/>
</dbReference>
<dbReference type="GO" id="GO:0009252">
    <property type="term" value="P:peptidoglycan biosynthetic process"/>
    <property type="evidence" value="ECO:0007669"/>
    <property type="project" value="UniProtKB-UniRule"/>
</dbReference>
<dbReference type="GO" id="GO:0008360">
    <property type="term" value="P:regulation of cell shape"/>
    <property type="evidence" value="ECO:0007669"/>
    <property type="project" value="UniProtKB-KW"/>
</dbReference>
<dbReference type="Gene3D" id="3.90.190.20">
    <property type="entry name" value="Mur ligase, C-terminal domain"/>
    <property type="match status" value="1"/>
</dbReference>
<dbReference type="Gene3D" id="3.40.1190.10">
    <property type="entry name" value="Mur-like, catalytic domain"/>
    <property type="match status" value="1"/>
</dbReference>
<dbReference type="Gene3D" id="3.40.50.720">
    <property type="entry name" value="NAD(P)-binding Rossmann-like Domain"/>
    <property type="match status" value="1"/>
</dbReference>
<dbReference type="HAMAP" id="MF_00046">
    <property type="entry name" value="MurC"/>
    <property type="match status" value="1"/>
</dbReference>
<dbReference type="InterPro" id="IPR036565">
    <property type="entry name" value="Mur-like_cat_sf"/>
</dbReference>
<dbReference type="InterPro" id="IPR004101">
    <property type="entry name" value="Mur_ligase_C"/>
</dbReference>
<dbReference type="InterPro" id="IPR036615">
    <property type="entry name" value="Mur_ligase_C_dom_sf"/>
</dbReference>
<dbReference type="InterPro" id="IPR013221">
    <property type="entry name" value="Mur_ligase_cen"/>
</dbReference>
<dbReference type="InterPro" id="IPR000713">
    <property type="entry name" value="Mur_ligase_N"/>
</dbReference>
<dbReference type="InterPro" id="IPR050061">
    <property type="entry name" value="MurCDEF_pg_biosynth"/>
</dbReference>
<dbReference type="InterPro" id="IPR005758">
    <property type="entry name" value="UDP-N-AcMur_Ala_ligase_MurC"/>
</dbReference>
<dbReference type="NCBIfam" id="TIGR01082">
    <property type="entry name" value="murC"/>
    <property type="match status" value="1"/>
</dbReference>
<dbReference type="PANTHER" id="PTHR43445:SF3">
    <property type="entry name" value="UDP-N-ACETYLMURAMATE--L-ALANINE LIGASE"/>
    <property type="match status" value="1"/>
</dbReference>
<dbReference type="PANTHER" id="PTHR43445">
    <property type="entry name" value="UDP-N-ACETYLMURAMATE--L-ALANINE LIGASE-RELATED"/>
    <property type="match status" value="1"/>
</dbReference>
<dbReference type="Pfam" id="PF01225">
    <property type="entry name" value="Mur_ligase"/>
    <property type="match status" value="1"/>
</dbReference>
<dbReference type="Pfam" id="PF02875">
    <property type="entry name" value="Mur_ligase_C"/>
    <property type="match status" value="1"/>
</dbReference>
<dbReference type="Pfam" id="PF08245">
    <property type="entry name" value="Mur_ligase_M"/>
    <property type="match status" value="1"/>
</dbReference>
<dbReference type="SUPFAM" id="SSF51984">
    <property type="entry name" value="MurCD N-terminal domain"/>
    <property type="match status" value="1"/>
</dbReference>
<dbReference type="SUPFAM" id="SSF53623">
    <property type="entry name" value="MurD-like peptide ligases, catalytic domain"/>
    <property type="match status" value="1"/>
</dbReference>
<dbReference type="SUPFAM" id="SSF53244">
    <property type="entry name" value="MurD-like peptide ligases, peptide-binding domain"/>
    <property type="match status" value="1"/>
</dbReference>
<comment type="function">
    <text evidence="1">Cell wall formation.</text>
</comment>
<comment type="catalytic activity">
    <reaction evidence="1">
        <text>UDP-N-acetyl-alpha-D-muramate + L-alanine + ATP = UDP-N-acetyl-alpha-D-muramoyl-L-alanine + ADP + phosphate + H(+)</text>
        <dbReference type="Rhea" id="RHEA:23372"/>
        <dbReference type="ChEBI" id="CHEBI:15378"/>
        <dbReference type="ChEBI" id="CHEBI:30616"/>
        <dbReference type="ChEBI" id="CHEBI:43474"/>
        <dbReference type="ChEBI" id="CHEBI:57972"/>
        <dbReference type="ChEBI" id="CHEBI:70757"/>
        <dbReference type="ChEBI" id="CHEBI:83898"/>
        <dbReference type="ChEBI" id="CHEBI:456216"/>
        <dbReference type="EC" id="6.3.2.8"/>
    </reaction>
</comment>
<comment type="pathway">
    <text evidence="1">Cell wall biogenesis; peptidoglycan biosynthesis.</text>
</comment>
<comment type="subcellular location">
    <subcellularLocation>
        <location evidence="1">Cytoplasm</location>
    </subcellularLocation>
</comment>
<comment type="similarity">
    <text evidence="1">Belongs to the MurCDEF family.</text>
</comment>
<organism>
    <name type="scientific">Bartonella bacilliformis (strain ATCC 35685 / KC583 / Herrer 020/F12,63)</name>
    <dbReference type="NCBI Taxonomy" id="360095"/>
    <lineage>
        <taxon>Bacteria</taxon>
        <taxon>Pseudomonadati</taxon>
        <taxon>Pseudomonadota</taxon>
        <taxon>Alphaproteobacteria</taxon>
        <taxon>Hyphomicrobiales</taxon>
        <taxon>Bartonellaceae</taxon>
        <taxon>Bartonella</taxon>
    </lineage>
</organism>
<sequence length="475" mass="52080">MKIPLNIGLIHFVGIGGIGMSGIAEVLHNLGYKIQGSDQANNTNIERLRSKGINVHIGHQAKNLGEAEVVVISTAIKKTNPEYIAAKEKHLPVVKRAEMLAELMRFRQAIAIGGTHGKTTTTSMVAALLDAGNFDPMVINGGIINAYGTNARMGNGNWMVVEADESDGTFLKLPADIVVVTNIDSEHLDHYGSFDAVRESFRQFVENVPFYGFAVMCLDHPEVQTLASRIDDRWVITYGANPQADVRFLNFSMKNKKAHFDVLIRSRKTGIQTELRDLVLPMSGKHNVSNATAAIAIAHELGISDEVIRKGLAEFGGVKRRFTQTGSWRGIDVFDDYGHHPVEIKAVLRAARESTNGQVIAIAQPHRYSRLCNLFDDFTTCFNDADTIMIAPVYAAGEEPITGFGSKELVEHIQMASHCDVRLIDDLEDVVSIVSTVAKSGDYVVFLGAGSITQWAYALPKRLAELDNNDEFSAN</sequence>
<reference key="1">
    <citation type="submission" date="2006-12" db="EMBL/GenBank/DDBJ databases">
        <authorList>
            <person name="Hendrix L."/>
            <person name="Mohamoud Y."/>
            <person name="Radune D."/>
            <person name="Shvartsbeyn A."/>
            <person name="Daugherty S."/>
            <person name="Dodson R."/>
            <person name="Durkin A.S."/>
            <person name="Harkins D."/>
            <person name="Huot H."/>
            <person name="Kothari S.P."/>
            <person name="Madupu R."/>
            <person name="Li J."/>
            <person name="Nelson W.C."/>
            <person name="Shrivastava S."/>
            <person name="Giglio M.G."/>
            <person name="Haft D."/>
            <person name="Selengut J."/>
            <person name="Fraser-Ligget C."/>
            <person name="Seshadri R."/>
        </authorList>
    </citation>
    <scope>NUCLEOTIDE SEQUENCE [LARGE SCALE GENOMIC DNA]</scope>
    <source>
        <strain>ATCC 35685 / KC583 / Herrer 020/F12,63</strain>
    </source>
</reference>
<gene>
    <name evidence="1" type="primary">murC</name>
    <name type="ordered locus">BARBAKC583_0946</name>
</gene>
<protein>
    <recommendedName>
        <fullName evidence="1">UDP-N-acetylmuramate--L-alanine ligase</fullName>
        <ecNumber evidence="1">6.3.2.8</ecNumber>
    </recommendedName>
    <alternativeName>
        <fullName evidence="1">UDP-N-acetylmuramoyl-L-alanine synthetase</fullName>
    </alternativeName>
</protein>
<feature type="chain" id="PRO_1000004311" description="UDP-N-acetylmuramate--L-alanine ligase">
    <location>
        <begin position="1"/>
        <end position="475"/>
    </location>
</feature>
<feature type="binding site" evidence="1">
    <location>
        <begin position="114"/>
        <end position="120"/>
    </location>
    <ligand>
        <name>ATP</name>
        <dbReference type="ChEBI" id="CHEBI:30616"/>
    </ligand>
</feature>
<accession>A1UTC4</accession>